<evidence type="ECO:0000255" key="1">
    <source>
        <dbReference type="HAMAP-Rule" id="MF_01337"/>
    </source>
</evidence>
<evidence type="ECO:0000305" key="2"/>
<organism>
    <name type="scientific">Streptococcus equi subsp. zooepidemicus (strain MGCS10565)</name>
    <dbReference type="NCBI Taxonomy" id="552526"/>
    <lineage>
        <taxon>Bacteria</taxon>
        <taxon>Bacillati</taxon>
        <taxon>Bacillota</taxon>
        <taxon>Bacilli</taxon>
        <taxon>Lactobacillales</taxon>
        <taxon>Streptococcaceae</taxon>
        <taxon>Streptococcus</taxon>
    </lineage>
</organism>
<accession>B4U516</accession>
<keyword id="KW-0687">Ribonucleoprotein</keyword>
<keyword id="KW-0689">Ribosomal protein</keyword>
<keyword id="KW-0694">RNA-binding</keyword>
<keyword id="KW-0699">rRNA-binding</keyword>
<comment type="function">
    <text evidence="1">This is one of the proteins that bind and probably mediate the attachment of the 5S RNA into the large ribosomal subunit, where it forms part of the central protuberance.</text>
</comment>
<comment type="subunit">
    <text evidence="1">Part of the 50S ribosomal subunit; part of the 5S rRNA/L5/L18/L25 subcomplex. Contacts the 5S and 23S rRNAs.</text>
</comment>
<comment type="similarity">
    <text evidence="1">Belongs to the universal ribosomal protein uL18 family.</text>
</comment>
<reference key="1">
    <citation type="journal article" date="2008" name="PLoS ONE">
        <title>Genome sequence of a lancefield group C Streptococcus zooepidemicus strain causing epidemic nephritis: new information about an old disease.</title>
        <authorList>
            <person name="Beres S.B."/>
            <person name="Sesso R."/>
            <person name="Pinto S.W.L."/>
            <person name="Hoe N.P."/>
            <person name="Porcella S.F."/>
            <person name="Deleo F.R."/>
            <person name="Musser J.M."/>
        </authorList>
    </citation>
    <scope>NUCLEOTIDE SEQUENCE [LARGE SCALE GENOMIC DNA]</scope>
    <source>
        <strain>MGCS10565</strain>
    </source>
</reference>
<proteinExistence type="inferred from homology"/>
<name>RL18_STREM</name>
<gene>
    <name evidence="1" type="primary">rplR</name>
    <name type="ordered locus">Sez_0072</name>
</gene>
<feature type="chain" id="PRO_1000142722" description="Large ribosomal subunit protein uL18">
    <location>
        <begin position="1"/>
        <end position="121"/>
    </location>
</feature>
<sequence length="121" mass="13220">MKIVISKPDKNKIRQKRHRRVRGKLSGTADRPRLNVFRSNTGIYAQVIDDVAGVTLASASTLDKEVSKGTKTEQAVVVGKLVAERAVAKGISEVVFDRGGYLYHGRVKALADAARENGLKF</sequence>
<protein>
    <recommendedName>
        <fullName evidence="1">Large ribosomal subunit protein uL18</fullName>
    </recommendedName>
    <alternativeName>
        <fullName evidence="2">50S ribosomal protein L18</fullName>
    </alternativeName>
</protein>
<dbReference type="EMBL" id="CP001129">
    <property type="protein sequence ID" value="ACG61455.1"/>
    <property type="molecule type" value="Genomic_DNA"/>
</dbReference>
<dbReference type="SMR" id="B4U516"/>
<dbReference type="KEGG" id="sez:Sez_0072"/>
<dbReference type="HOGENOM" id="CLU_098841_0_1_9"/>
<dbReference type="Proteomes" id="UP000001873">
    <property type="component" value="Chromosome"/>
</dbReference>
<dbReference type="GO" id="GO:0022625">
    <property type="term" value="C:cytosolic large ribosomal subunit"/>
    <property type="evidence" value="ECO:0007669"/>
    <property type="project" value="TreeGrafter"/>
</dbReference>
<dbReference type="GO" id="GO:0008097">
    <property type="term" value="F:5S rRNA binding"/>
    <property type="evidence" value="ECO:0007669"/>
    <property type="project" value="TreeGrafter"/>
</dbReference>
<dbReference type="GO" id="GO:0003735">
    <property type="term" value="F:structural constituent of ribosome"/>
    <property type="evidence" value="ECO:0007669"/>
    <property type="project" value="InterPro"/>
</dbReference>
<dbReference type="GO" id="GO:0006412">
    <property type="term" value="P:translation"/>
    <property type="evidence" value="ECO:0007669"/>
    <property type="project" value="UniProtKB-UniRule"/>
</dbReference>
<dbReference type="CDD" id="cd00432">
    <property type="entry name" value="Ribosomal_L18_L5e"/>
    <property type="match status" value="1"/>
</dbReference>
<dbReference type="FunFam" id="3.30.420.100:FF:000001">
    <property type="entry name" value="50S ribosomal protein L18"/>
    <property type="match status" value="1"/>
</dbReference>
<dbReference type="Gene3D" id="3.30.420.100">
    <property type="match status" value="1"/>
</dbReference>
<dbReference type="HAMAP" id="MF_01337_B">
    <property type="entry name" value="Ribosomal_uL18_B"/>
    <property type="match status" value="1"/>
</dbReference>
<dbReference type="InterPro" id="IPR004389">
    <property type="entry name" value="Ribosomal_uL18_bac-type"/>
</dbReference>
<dbReference type="InterPro" id="IPR005484">
    <property type="entry name" value="Ribosomal_uL18_bac/euk"/>
</dbReference>
<dbReference type="NCBIfam" id="TIGR00060">
    <property type="entry name" value="L18_bact"/>
    <property type="match status" value="1"/>
</dbReference>
<dbReference type="PANTHER" id="PTHR12899">
    <property type="entry name" value="39S RIBOSOMAL PROTEIN L18, MITOCHONDRIAL"/>
    <property type="match status" value="1"/>
</dbReference>
<dbReference type="PANTHER" id="PTHR12899:SF3">
    <property type="entry name" value="LARGE RIBOSOMAL SUBUNIT PROTEIN UL18M"/>
    <property type="match status" value="1"/>
</dbReference>
<dbReference type="Pfam" id="PF00861">
    <property type="entry name" value="Ribosomal_L18p"/>
    <property type="match status" value="1"/>
</dbReference>
<dbReference type="SUPFAM" id="SSF53137">
    <property type="entry name" value="Translational machinery components"/>
    <property type="match status" value="1"/>
</dbReference>